<organism>
    <name type="scientific">Apomys gracilirostris</name>
    <name type="common">Large mindoro forest mouse</name>
    <dbReference type="NCBI Taxonomy" id="238003"/>
    <lineage>
        <taxon>Eukaryota</taxon>
        <taxon>Metazoa</taxon>
        <taxon>Chordata</taxon>
        <taxon>Craniata</taxon>
        <taxon>Vertebrata</taxon>
        <taxon>Euteleostomi</taxon>
        <taxon>Mammalia</taxon>
        <taxon>Eutheria</taxon>
        <taxon>Euarchontoglires</taxon>
        <taxon>Glires</taxon>
        <taxon>Rodentia</taxon>
        <taxon>Myomorpha</taxon>
        <taxon>Muroidea</taxon>
        <taxon>Muridae</taxon>
        <taxon>Murinae</taxon>
        <taxon>Apomys</taxon>
    </lineage>
</organism>
<keyword id="KW-0249">Electron transport</keyword>
<keyword id="KW-0349">Heme</keyword>
<keyword id="KW-0408">Iron</keyword>
<keyword id="KW-0472">Membrane</keyword>
<keyword id="KW-0479">Metal-binding</keyword>
<keyword id="KW-0496">Mitochondrion</keyword>
<keyword id="KW-0999">Mitochondrion inner membrane</keyword>
<keyword id="KW-0679">Respiratory chain</keyword>
<keyword id="KW-0812">Transmembrane</keyword>
<keyword id="KW-1133">Transmembrane helix</keyword>
<keyword id="KW-0813">Transport</keyword>
<keyword id="KW-0830">Ubiquinone</keyword>
<evidence type="ECO:0000250" key="1"/>
<evidence type="ECO:0000250" key="2">
    <source>
        <dbReference type="UniProtKB" id="P00157"/>
    </source>
</evidence>
<evidence type="ECO:0000255" key="3">
    <source>
        <dbReference type="PROSITE-ProRule" id="PRU00967"/>
    </source>
</evidence>
<evidence type="ECO:0000255" key="4">
    <source>
        <dbReference type="PROSITE-ProRule" id="PRU00968"/>
    </source>
</evidence>
<sequence>MTNIRKTHPLMKIINHSFIDLPTPSNISSWWNFGSLLGLCLMIQIVTGLFLAMHYTSDTTTAFSSVAHICRDVNYGWLIRYMHANGASMFFICLFLHVGRGVYYGSYTFMETWNIGVILLFAMMATAFMGYVLPWGQMSFWGATVITNLLSAIPYIGTSLVEWIWGGFXVDKATLTRFFAFHFILPFIITALVIIHLLFLHETGSNNPTGLNSDADKIPFHPYYTVKDLLGALVLILFLMTLVLFFPDLLGDPDNYTPANPLNTPPHIKPEWYFLFAYAILRSIPNKLGGVLALILSILVLAFLPLLHTSKQRSLMFRPITQTLYWMLVANLLILTWVGGQPVEHPFTTIGQLASISYFSIILILMPISGMIEDKLLKWSL</sequence>
<protein>
    <recommendedName>
        <fullName>Cytochrome b</fullName>
    </recommendedName>
    <alternativeName>
        <fullName>Complex III subunit 3</fullName>
    </alternativeName>
    <alternativeName>
        <fullName>Complex III subunit III</fullName>
    </alternativeName>
    <alternativeName>
        <fullName>Cytochrome b-c1 complex subunit 3</fullName>
    </alternativeName>
    <alternativeName>
        <fullName>Ubiquinol-cytochrome-c reductase complex cytochrome b subunit</fullName>
    </alternativeName>
</protein>
<reference key="1">
    <citation type="journal article" date="2003" name="Biol. J. Linn. Soc. Lond.">
        <title>Molecular phylogeny of the endemic Philippine rodent Apomys (Muridae) and the dynamics of diversification in an oceanic archipelago.</title>
        <authorList>
            <person name="Steppan S.J."/>
            <person name="Zawadzki C."/>
            <person name="Heaney L.R."/>
        </authorList>
    </citation>
    <scope>NUCLEOTIDE SEQUENCE [GENOMIC DNA]</scope>
</reference>
<comment type="function">
    <text evidence="2">Component of the ubiquinol-cytochrome c reductase complex (complex III or cytochrome b-c1 complex) that is part of the mitochondrial respiratory chain. The b-c1 complex mediates electron transfer from ubiquinol to cytochrome c. Contributes to the generation of a proton gradient across the mitochondrial membrane that is then used for ATP synthesis.</text>
</comment>
<comment type="cofactor">
    <cofactor evidence="2">
        <name>heme b</name>
        <dbReference type="ChEBI" id="CHEBI:60344"/>
    </cofactor>
    <text evidence="2">Binds 2 heme b groups non-covalently.</text>
</comment>
<comment type="subunit">
    <text evidence="2">The cytochrome bc1 complex contains 11 subunits: 3 respiratory subunits (MT-CYB, CYC1 and UQCRFS1), 2 core proteins (UQCRC1 and UQCRC2) and 6 low-molecular weight proteins (UQCRH/QCR6, UQCRB/QCR7, UQCRQ/QCR8, UQCR10/QCR9, UQCR11/QCR10 and a cleavage product of UQCRFS1). This cytochrome bc1 complex then forms a dimer.</text>
</comment>
<comment type="subcellular location">
    <subcellularLocation>
        <location evidence="2">Mitochondrion inner membrane</location>
        <topology evidence="2">Multi-pass membrane protein</topology>
    </subcellularLocation>
</comment>
<comment type="miscellaneous">
    <text evidence="1">Heme 1 (or BL or b562) is low-potential and absorbs at about 562 nm, and heme 2 (or BH or b566) is high-potential and absorbs at about 566 nm.</text>
</comment>
<comment type="similarity">
    <text evidence="3 4">Belongs to the cytochrome b family.</text>
</comment>
<comment type="caution">
    <text evidence="2">The full-length protein contains only eight transmembrane helices, not nine as predicted by bioinformatics tools.</text>
</comment>
<geneLocation type="mitochondrion"/>
<proteinExistence type="inferred from homology"/>
<accession>Q7YC71</accession>
<gene>
    <name type="primary">MT-CYB</name>
    <name type="synonym">COB</name>
    <name type="synonym">CYTB</name>
    <name type="synonym">MTCYB</name>
</gene>
<name>CYB_APOGR</name>
<dbReference type="EMBL" id="AY324465">
    <property type="protein sequence ID" value="AAP88710.2"/>
    <property type="molecule type" value="Genomic_DNA"/>
</dbReference>
<dbReference type="GO" id="GO:0005743">
    <property type="term" value="C:mitochondrial inner membrane"/>
    <property type="evidence" value="ECO:0007669"/>
    <property type="project" value="UniProtKB-SubCell"/>
</dbReference>
<dbReference type="GO" id="GO:0045275">
    <property type="term" value="C:respiratory chain complex III"/>
    <property type="evidence" value="ECO:0007669"/>
    <property type="project" value="InterPro"/>
</dbReference>
<dbReference type="GO" id="GO:0046872">
    <property type="term" value="F:metal ion binding"/>
    <property type="evidence" value="ECO:0007669"/>
    <property type="project" value="UniProtKB-KW"/>
</dbReference>
<dbReference type="GO" id="GO:0008121">
    <property type="term" value="F:ubiquinol-cytochrome-c reductase activity"/>
    <property type="evidence" value="ECO:0007669"/>
    <property type="project" value="InterPro"/>
</dbReference>
<dbReference type="GO" id="GO:0006122">
    <property type="term" value="P:mitochondrial electron transport, ubiquinol to cytochrome c"/>
    <property type="evidence" value="ECO:0007669"/>
    <property type="project" value="TreeGrafter"/>
</dbReference>
<dbReference type="CDD" id="cd00290">
    <property type="entry name" value="cytochrome_b_C"/>
    <property type="match status" value="1"/>
</dbReference>
<dbReference type="CDD" id="cd00284">
    <property type="entry name" value="Cytochrome_b_N"/>
    <property type="match status" value="1"/>
</dbReference>
<dbReference type="FunFam" id="1.20.810.10:FF:000002">
    <property type="entry name" value="Cytochrome b"/>
    <property type="match status" value="1"/>
</dbReference>
<dbReference type="Gene3D" id="1.20.810.10">
    <property type="entry name" value="Cytochrome Bc1 Complex, Chain C"/>
    <property type="match status" value="1"/>
</dbReference>
<dbReference type="InterPro" id="IPR005798">
    <property type="entry name" value="Cyt_b/b6_C"/>
</dbReference>
<dbReference type="InterPro" id="IPR036150">
    <property type="entry name" value="Cyt_b/b6_C_sf"/>
</dbReference>
<dbReference type="InterPro" id="IPR005797">
    <property type="entry name" value="Cyt_b/b6_N"/>
</dbReference>
<dbReference type="InterPro" id="IPR027387">
    <property type="entry name" value="Cytb/b6-like_sf"/>
</dbReference>
<dbReference type="InterPro" id="IPR030689">
    <property type="entry name" value="Cytochrome_b"/>
</dbReference>
<dbReference type="InterPro" id="IPR048260">
    <property type="entry name" value="Cytochrome_b_C_euk/bac"/>
</dbReference>
<dbReference type="InterPro" id="IPR048259">
    <property type="entry name" value="Cytochrome_b_N_euk/bac"/>
</dbReference>
<dbReference type="InterPro" id="IPR016174">
    <property type="entry name" value="Di-haem_cyt_TM"/>
</dbReference>
<dbReference type="PANTHER" id="PTHR19271">
    <property type="entry name" value="CYTOCHROME B"/>
    <property type="match status" value="1"/>
</dbReference>
<dbReference type="PANTHER" id="PTHR19271:SF16">
    <property type="entry name" value="CYTOCHROME B"/>
    <property type="match status" value="1"/>
</dbReference>
<dbReference type="Pfam" id="PF00032">
    <property type="entry name" value="Cytochrom_B_C"/>
    <property type="match status" value="1"/>
</dbReference>
<dbReference type="Pfam" id="PF00033">
    <property type="entry name" value="Cytochrome_B"/>
    <property type="match status" value="1"/>
</dbReference>
<dbReference type="PIRSF" id="PIRSF038885">
    <property type="entry name" value="COB"/>
    <property type="match status" value="1"/>
</dbReference>
<dbReference type="SUPFAM" id="SSF81648">
    <property type="entry name" value="a domain/subunit of cytochrome bc1 complex (Ubiquinol-cytochrome c reductase)"/>
    <property type="match status" value="1"/>
</dbReference>
<dbReference type="SUPFAM" id="SSF81342">
    <property type="entry name" value="Transmembrane di-heme cytochromes"/>
    <property type="match status" value="1"/>
</dbReference>
<dbReference type="PROSITE" id="PS51003">
    <property type="entry name" value="CYTB_CTER"/>
    <property type="match status" value="1"/>
</dbReference>
<dbReference type="PROSITE" id="PS51002">
    <property type="entry name" value="CYTB_NTER"/>
    <property type="match status" value="1"/>
</dbReference>
<feature type="chain" id="PRO_0000254985" description="Cytochrome b">
    <location>
        <begin position="1"/>
        <end position="381"/>
    </location>
</feature>
<feature type="transmembrane region" description="Helical" evidence="2">
    <location>
        <begin position="33"/>
        <end position="53"/>
    </location>
</feature>
<feature type="transmembrane region" description="Helical" evidence="2">
    <location>
        <begin position="77"/>
        <end position="98"/>
    </location>
</feature>
<feature type="transmembrane region" description="Helical" evidence="2">
    <location>
        <begin position="113"/>
        <end position="133"/>
    </location>
</feature>
<feature type="transmembrane region" description="Helical" evidence="2">
    <location>
        <begin position="178"/>
        <end position="198"/>
    </location>
</feature>
<feature type="transmembrane region" description="Helical" evidence="2">
    <location>
        <begin position="226"/>
        <end position="246"/>
    </location>
</feature>
<feature type="transmembrane region" description="Helical" evidence="2">
    <location>
        <begin position="288"/>
        <end position="308"/>
    </location>
</feature>
<feature type="transmembrane region" description="Helical" evidence="2">
    <location>
        <begin position="320"/>
        <end position="340"/>
    </location>
</feature>
<feature type="transmembrane region" description="Helical" evidence="2">
    <location>
        <begin position="347"/>
        <end position="367"/>
    </location>
</feature>
<feature type="binding site" description="axial binding residue" evidence="2">
    <location>
        <position position="83"/>
    </location>
    <ligand>
        <name>heme b</name>
        <dbReference type="ChEBI" id="CHEBI:60344"/>
        <label>b562</label>
    </ligand>
    <ligandPart>
        <name>Fe</name>
        <dbReference type="ChEBI" id="CHEBI:18248"/>
    </ligandPart>
</feature>
<feature type="binding site" description="axial binding residue" evidence="2">
    <location>
        <position position="97"/>
    </location>
    <ligand>
        <name>heme b</name>
        <dbReference type="ChEBI" id="CHEBI:60344"/>
        <label>b566</label>
    </ligand>
    <ligandPart>
        <name>Fe</name>
        <dbReference type="ChEBI" id="CHEBI:18248"/>
    </ligandPart>
</feature>
<feature type="binding site" description="axial binding residue" evidence="2">
    <location>
        <position position="182"/>
    </location>
    <ligand>
        <name>heme b</name>
        <dbReference type="ChEBI" id="CHEBI:60344"/>
        <label>b562</label>
    </ligand>
    <ligandPart>
        <name>Fe</name>
        <dbReference type="ChEBI" id="CHEBI:18248"/>
    </ligandPart>
</feature>
<feature type="binding site" description="axial binding residue" evidence="2">
    <location>
        <position position="196"/>
    </location>
    <ligand>
        <name>heme b</name>
        <dbReference type="ChEBI" id="CHEBI:60344"/>
        <label>b566</label>
    </ligand>
    <ligandPart>
        <name>Fe</name>
        <dbReference type="ChEBI" id="CHEBI:18248"/>
    </ligandPart>
</feature>
<feature type="binding site" evidence="2">
    <location>
        <position position="201"/>
    </location>
    <ligand>
        <name>a ubiquinone</name>
        <dbReference type="ChEBI" id="CHEBI:16389"/>
    </ligand>
</feature>